<reference key="1">
    <citation type="journal article" date="2003" name="Genes Genet. Syst.">
        <title>Divergence and heterogeneity of the histone gene repeating units in the Drosophila melanogaster species subgroup.</title>
        <authorList>
            <person name="Kakita M."/>
            <person name="Shimizu T."/>
            <person name="Emoto M."/>
            <person name="Nagai M."/>
            <person name="Takeguchi M."/>
            <person name="Hosono Y."/>
            <person name="Kume N."/>
            <person name="Ozawa T."/>
            <person name="Ueda M."/>
            <person name="Bhuiyan M.S."/>
            <person name="Matsuo Y."/>
        </authorList>
    </citation>
    <scope>NUCLEOTIDE SEQUENCE [GENOMIC DNA] (HIS2B)</scope>
</reference>
<reference key="2">
    <citation type="journal article" date="2007" name="Nature">
        <title>Evolution of genes and genomes on the Drosophila phylogeny.</title>
        <authorList>
            <consortium name="Drosophila 12 genomes consortium"/>
        </authorList>
    </citation>
    <scope>NUCLEOTIDE SEQUENCE [LARGE SCALE GENOMIC DNA] (GM10080; GM11748; GM11937; GM13135; GM13187; GM13191; GM13213; GM13539; GM13541; GM13542; GM13608; GM13614; GM13660; GM15473; GM16168; GM16542; GM17425; GM17711; GM18819; GM19277; GM19328; GM19430; GM19608; GM19672; GM19696; GM19697; GM19701; GM19703; GM19734; GM19736; GM19761; GM22424; GM22584; GM23249; GM23434; GM23805; GM24037; GM26707 AND GM26724)</scope>
    <source>
        <strain>Rob3c / Tucson 14021-0248.25</strain>
    </source>
</reference>
<feature type="initiator methionine" description="Removed" evidence="1">
    <location>
        <position position="1"/>
    </location>
</feature>
<feature type="chain" id="PRO_0000071863" description="Histone H2B">
    <location>
        <begin position="2"/>
        <end position="123"/>
    </location>
</feature>
<feature type="region of interest" description="Disordered" evidence="3">
    <location>
        <begin position="1"/>
        <end position="31"/>
    </location>
</feature>
<feature type="modified residue" description="N-methylproline; partial" evidence="2">
    <location>
        <position position="2"/>
    </location>
</feature>
<feature type="modified residue" description="N6-succinyllysine" evidence="2">
    <location>
        <position position="44"/>
    </location>
</feature>
<feature type="modified residue" description="N6-succinyllysine" evidence="2">
    <location>
        <position position="114"/>
    </location>
</feature>
<feature type="modified residue" description="N6-succinyllysine" evidence="2">
    <location>
        <position position="118"/>
    </location>
</feature>
<feature type="glycosylation site" description="O-linked (GlcNAc) serine" evidence="1">
    <location>
        <position position="110"/>
    </location>
</feature>
<feature type="cross-link" description="Glycyl lysine isopeptide (Lys-Gly) (interchain with G-Cter in ubiquitin)" evidence="2">
    <location>
        <position position="118"/>
    </location>
</feature>
<comment type="function">
    <text>Core component of nucleosome. Nucleosomes wrap and compact DNA into chromatin, limiting DNA accessibility to the cellular machineries which require DNA as a template. Histones thereby play a central role in transcription regulation, DNA repair, DNA replication and chromosomal stability. DNA accessibility is regulated via a complex set of post-translational modifications of histones, also called histone code, and nucleosome remodeling.</text>
</comment>
<comment type="subunit">
    <text>The nucleosome is a histone octamer containing two molecules each of H2A, H2B, H3 and H4 assembled in one H3-H4 heterotetramer and two H2A-H2B heterodimers. The octamer wraps approximately 147 bp of DNA.</text>
</comment>
<comment type="subcellular location">
    <subcellularLocation>
        <location>Nucleus</location>
    </subcellularLocation>
    <subcellularLocation>
        <location>Chromosome</location>
    </subcellularLocation>
</comment>
<comment type="PTM">
    <text evidence="2">Phosphorylated by the catalytic component of the Dbf4-dependent kinase (DDK) complex Cdc7.</text>
</comment>
<comment type="PTM">
    <text evidence="2">Monoubiquitination of Lys-118 by Bre1 gives a specific tag for epigenetic transcriptional activation and is also prerequisite for histone H3 'Lys-4' and 'Lys-79' methylation (By similarity). Deubiquitination of Lys-118 by the SAGA complex is involved in activating transcription of a large subset of genes (By similarity).</text>
</comment>
<comment type="PTM">
    <text evidence="2">Methylation at Pro-2 increases upon heat shock.</text>
</comment>
<comment type="PTM">
    <text evidence="2">GlcNAcylation at Ser-110 promotes monoubiquitination of Lys-118. It fluctuates in response to extracellular glucose, and associates with transcribed genes.</text>
</comment>
<comment type="similarity">
    <text evidence="4">Belongs to the histone H2B family.</text>
</comment>
<proteinExistence type="inferred from homology"/>
<evidence type="ECO:0000250" key="1"/>
<evidence type="ECO:0000250" key="2">
    <source>
        <dbReference type="UniProtKB" id="P02283"/>
    </source>
</evidence>
<evidence type="ECO:0000256" key="3">
    <source>
        <dbReference type="SAM" id="MobiDB-lite"/>
    </source>
</evidence>
<evidence type="ECO:0000305" key="4"/>
<name>H2B_DROSE</name>
<sequence>MPPKTSGKAAKKAGKAQKNITKNDKKKKRKRKESYAIYIYKVLKQVHPDTGISSKAMSIMNSFVNDIFERIAAEASRLAHYNKRSTITSREIQTAVRLLLPGELAKHAVSEGTKAVTKYTSSK</sequence>
<organism>
    <name type="scientific">Drosophila sechellia</name>
    <name type="common">Fruit fly</name>
    <dbReference type="NCBI Taxonomy" id="7238"/>
    <lineage>
        <taxon>Eukaryota</taxon>
        <taxon>Metazoa</taxon>
        <taxon>Ecdysozoa</taxon>
        <taxon>Arthropoda</taxon>
        <taxon>Hexapoda</taxon>
        <taxon>Insecta</taxon>
        <taxon>Pterygota</taxon>
        <taxon>Neoptera</taxon>
        <taxon>Endopterygota</taxon>
        <taxon>Diptera</taxon>
        <taxon>Brachycera</taxon>
        <taxon>Muscomorpha</taxon>
        <taxon>Ephydroidea</taxon>
        <taxon>Drosophilidae</taxon>
        <taxon>Drosophila</taxon>
        <taxon>Sophophora</taxon>
    </lineage>
</organism>
<keyword id="KW-0158">Chromosome</keyword>
<keyword id="KW-0238">DNA-binding</keyword>
<keyword id="KW-0325">Glycoprotein</keyword>
<keyword id="KW-1017">Isopeptide bond</keyword>
<keyword id="KW-0488">Methylation</keyword>
<keyword id="KW-0544">Nucleosome core</keyword>
<keyword id="KW-0539">Nucleus</keyword>
<keyword id="KW-1185">Reference proteome</keyword>
<keyword id="KW-0832">Ubl conjugation</keyword>
<gene>
    <name type="primary">His2B</name>
</gene>
<gene>
    <name type="ORF">GM10080</name>
</gene>
<gene>
    <name type="ORF">GM11748</name>
</gene>
<gene>
    <name type="ORF">GM11937</name>
</gene>
<gene>
    <name type="ORF">GM13135</name>
</gene>
<gene>
    <name type="ORF">GM13187</name>
</gene>
<gene>
    <name type="ORF">GM13191</name>
</gene>
<gene>
    <name type="ORF">GM13213</name>
</gene>
<gene>
    <name type="ORF">GM13539</name>
</gene>
<gene>
    <name type="ORF">GM13541</name>
</gene>
<gene>
    <name type="ORF">GM13542</name>
</gene>
<gene>
    <name type="ORF">GM13608</name>
</gene>
<gene>
    <name type="ORF">GM13614</name>
</gene>
<gene>
    <name type="ORF">GM13660</name>
</gene>
<gene>
    <name type="ORF">GM15473</name>
</gene>
<gene>
    <name type="ORF">GM16168</name>
</gene>
<gene>
    <name type="ORF">GM16542</name>
</gene>
<gene>
    <name type="ORF">GM17425</name>
</gene>
<gene>
    <name type="ORF">GM17711</name>
</gene>
<gene>
    <name type="ORF">GM18819</name>
</gene>
<gene>
    <name type="ORF">GM19277</name>
</gene>
<gene>
    <name type="ORF">GM19328</name>
</gene>
<gene>
    <name type="ORF">GM19430</name>
</gene>
<gene>
    <name type="ORF">GM19608</name>
</gene>
<gene>
    <name type="ORF">GM19672</name>
</gene>
<gene>
    <name type="ORF">GM19696</name>
</gene>
<gene>
    <name type="ORF">GM19697</name>
</gene>
<gene>
    <name type="ORF">GM19701</name>
</gene>
<gene>
    <name type="ORF">GM19703</name>
</gene>
<gene>
    <name type="ORF">GM19734</name>
</gene>
<gene>
    <name type="ORF">GM19736</name>
</gene>
<gene>
    <name type="ORF">GM19761</name>
</gene>
<gene>
    <name type="ORF">GM22424</name>
</gene>
<gene>
    <name type="ORF">GM22584</name>
</gene>
<gene>
    <name type="ORF">GM23249</name>
</gene>
<gene>
    <name type="ORF">GM23434</name>
</gene>
<gene>
    <name type="ORF">GM23805</name>
</gene>
<gene>
    <name type="ORF">GM24037</name>
</gene>
<gene>
    <name type="ORF">GM26707</name>
</gene>
<gene>
    <name type="ORF">GM26724</name>
</gene>
<accession>Q76FD7</accession>
<accession>B4ILY8</accession>
<dbReference type="EMBL" id="AB105184">
    <property type="protein sequence ID" value="BAD02442.1"/>
    <property type="molecule type" value="Genomic_DNA"/>
</dbReference>
<dbReference type="EMBL" id="CH480906">
    <property type="protein sequence ID" value="EDW56421.1"/>
    <property type="molecule type" value="Genomic_DNA"/>
</dbReference>
<dbReference type="EMBL" id="CH480906">
    <property type="protein sequence ID" value="EDW56426.1"/>
    <property type="molecule type" value="Genomic_DNA"/>
</dbReference>
<dbReference type="EMBL" id="CH480906">
    <property type="protein sequence ID" value="EDW56436.1"/>
    <property type="molecule type" value="Genomic_DNA"/>
</dbReference>
<dbReference type="EMBL" id="CH480906">
    <property type="protein sequence ID" value="EDW56440.1"/>
    <property type="molecule type" value="Genomic_DNA"/>
</dbReference>
<dbReference type="EMBL" id="CH481037">
    <property type="protein sequence ID" value="EDW49038.1"/>
    <property type="molecule type" value="Genomic_DNA"/>
</dbReference>
<dbReference type="EMBL" id="CH481037">
    <property type="protein sequence ID" value="EDW49043.1"/>
    <property type="molecule type" value="Genomic_DNA"/>
</dbReference>
<dbReference type="EMBL" id="CH481172">
    <property type="protein sequence ID" value="EDW51578.1"/>
    <property type="molecule type" value="Genomic_DNA"/>
</dbReference>
<dbReference type="EMBL" id="CH481183">
    <property type="protein sequence ID" value="EDW52629.1"/>
    <property type="molecule type" value="Genomic_DNA"/>
</dbReference>
<dbReference type="EMBL" id="CH481183">
    <property type="protein sequence ID" value="EDW52630.1"/>
    <property type="molecule type" value="Genomic_DNA"/>
</dbReference>
<dbReference type="EMBL" id="CH481183">
    <property type="protein sequence ID" value="EDW52634.1"/>
    <property type="molecule type" value="Genomic_DNA"/>
</dbReference>
<dbReference type="EMBL" id="CH481193">
    <property type="protein sequence ID" value="EDW52668.1"/>
    <property type="molecule type" value="Genomic_DNA"/>
</dbReference>
<dbReference type="EMBL" id="CH481193">
    <property type="protein sequence ID" value="EDW52673.1"/>
    <property type="molecule type" value="Genomic_DNA"/>
</dbReference>
<dbReference type="EMBL" id="CH481254">
    <property type="protein sequence ID" value="EDW52842.1"/>
    <property type="molecule type" value="Genomic_DNA"/>
</dbReference>
<dbReference type="EMBL" id="CH481254">
    <property type="protein sequence ID" value="EDW52846.1"/>
    <property type="molecule type" value="Genomic_DNA"/>
</dbReference>
<dbReference type="EMBL" id="CH481370">
    <property type="protein sequence ID" value="EDW54702.1"/>
    <property type="molecule type" value="Genomic_DNA"/>
</dbReference>
<dbReference type="EMBL" id="CH481534">
    <property type="protein sequence ID" value="EDW55918.1"/>
    <property type="molecule type" value="Genomic_DNA"/>
</dbReference>
<dbReference type="EMBL" id="CH482051">
    <property type="protein sequence ID" value="EDW48890.1"/>
    <property type="molecule type" value="Genomic_DNA"/>
</dbReference>
<dbReference type="EMBL" id="CH482148">
    <property type="protein sequence ID" value="EDW49318.1"/>
    <property type="molecule type" value="Genomic_DNA"/>
</dbReference>
<dbReference type="EMBL" id="CH676531">
    <property type="protein sequence ID" value="EDW53864.1"/>
    <property type="molecule type" value="Genomic_DNA"/>
</dbReference>
<dbReference type="EMBL" id="CH676546">
    <property type="protein sequence ID" value="EDW54686.1"/>
    <property type="molecule type" value="Genomic_DNA"/>
</dbReference>
<dbReference type="EMBL" id="CH676587">
    <property type="protein sequence ID" value="EDW55442.1"/>
    <property type="molecule type" value="Genomic_DNA"/>
</dbReference>
<dbReference type="EMBL" id="CH677916">
    <property type="protein sequence ID" value="EDW49750.1"/>
    <property type="molecule type" value="Genomic_DNA"/>
</dbReference>
<dbReference type="EMBL" id="CH678886">
    <property type="protein sequence ID" value="EDW51648.1"/>
    <property type="molecule type" value="Genomic_DNA"/>
</dbReference>
<dbReference type="EMBL" id="CH679757">
    <property type="protein sequence ID" value="EDW52837.1"/>
    <property type="molecule type" value="Genomic_DNA"/>
</dbReference>
<dbReference type="EMBL" id="CH680033">
    <property type="protein sequence ID" value="EDW53687.1"/>
    <property type="molecule type" value="Genomic_DNA"/>
</dbReference>
<dbReference type="EMBL" id="CH680609">
    <property type="protein sequence ID" value="EDW53838.1"/>
    <property type="molecule type" value="Genomic_DNA"/>
</dbReference>
<dbReference type="EMBL" id="CH680693">
    <property type="protein sequence ID" value="EDW53845.1"/>
    <property type="molecule type" value="Genomic_DNA"/>
</dbReference>
<dbReference type="EMBL" id="CH682800">
    <property type="protein sequence ID" value="EDW55448.1"/>
    <property type="molecule type" value="Genomic_DNA"/>
</dbReference>
<dbReference type="EMBL" id="CH682823">
    <property type="protein sequence ID" value="EDW55453.1"/>
    <property type="molecule type" value="Genomic_DNA"/>
</dbReference>
<dbReference type="EMBL" id="CH683660">
    <property type="protein sequence ID" value="EDW55913.1"/>
    <property type="molecule type" value="Genomic_DNA"/>
</dbReference>
<dbReference type="EMBL" id="CH684007">
    <property type="protein sequence ID" value="EDW56409.1"/>
    <property type="molecule type" value="Genomic_DNA"/>
</dbReference>
<dbReference type="EMBL" id="CH684185">
    <property type="protein sequence ID" value="EDW56448.1"/>
    <property type="molecule type" value="Genomic_DNA"/>
</dbReference>
<dbReference type="EMBL" id="CH684262">
    <property type="protein sequence ID" value="EDW56458.1"/>
    <property type="molecule type" value="Genomic_DNA"/>
</dbReference>
<dbReference type="EMBL" id="CH684467">
    <property type="protein sequence ID" value="EDW56483.1"/>
    <property type="molecule type" value="Genomic_DNA"/>
</dbReference>
<dbReference type="EMBL" id="CH684537">
    <property type="protein sequence ID" value="EDW56489.1"/>
    <property type="molecule type" value="Genomic_DNA"/>
</dbReference>
<dbReference type="EMBL" id="CH685029">
    <property type="protein sequence ID" value="EDW43593.1"/>
    <property type="molecule type" value="Genomic_DNA"/>
</dbReference>
<dbReference type="EMBL" id="CH685136">
    <property type="protein sequence ID" value="EDW43597.1"/>
    <property type="molecule type" value="Genomic_DNA"/>
</dbReference>
<dbReference type="EMBL" id="CH685650">
    <property type="protein sequence ID" value="EDW43648.1"/>
    <property type="molecule type" value="Genomic_DNA"/>
</dbReference>
<dbReference type="EMBL" id="CH686458">
    <property type="protein sequence ID" value="EDW44119.1"/>
    <property type="molecule type" value="Genomic_DNA"/>
</dbReference>
<dbReference type="RefSeq" id="XP_002044748.1">
    <property type="nucleotide sequence ID" value="XM_002044712.1"/>
</dbReference>
<dbReference type="RefSeq" id="XP_002044753.1">
    <property type="nucleotide sequence ID" value="XM_002044717.1"/>
</dbReference>
<dbReference type="RefSeq" id="XP_002044763.1">
    <property type="nucleotide sequence ID" value="XM_002044727.1"/>
</dbReference>
<dbReference type="RefSeq" id="XP_002044767.1">
    <property type="nucleotide sequence ID" value="XM_002044731.1"/>
</dbReference>
<dbReference type="RefSeq" id="XP_002044957.1">
    <property type="nucleotide sequence ID" value="XM_002044921.1"/>
</dbReference>
<dbReference type="RefSeq" id="XP_002044962.1">
    <property type="nucleotide sequence ID" value="XM_002044926.1"/>
</dbReference>
<dbReference type="RefSeq" id="XP_002045038.1">
    <property type="nucleotide sequence ID" value="XM_002045002.1"/>
</dbReference>
<dbReference type="RefSeq" id="XP_002045043.1">
    <property type="nucleotide sequence ID" value="XM_002045007.1"/>
</dbReference>
<dbReference type="RefSeq" id="XP_002045044.1">
    <property type="nucleotide sequence ID" value="XM_002045008.1"/>
</dbReference>
<dbReference type="RefSeq" id="XP_002045048.1">
    <property type="nucleotide sequence ID" value="XM_002045012.1"/>
</dbReference>
<dbReference type="RefSeq" id="XP_002045052.1">
    <property type="nucleotide sequence ID" value="XM_002045016.1"/>
</dbReference>
<dbReference type="RefSeq" id="XP_002045057.1">
    <property type="nucleotide sequence ID" value="XM_002045021.1"/>
</dbReference>
<dbReference type="RefSeq" id="XP_002045094.1">
    <property type="nucleotide sequence ID" value="XM_002045058.1"/>
</dbReference>
<dbReference type="RefSeq" id="XP_002045098.1">
    <property type="nucleotide sequence ID" value="XM_002045062.1"/>
</dbReference>
<dbReference type="RefSeq" id="XP_002045125.1">
    <property type="nucleotide sequence ID" value="XM_002045089.1"/>
</dbReference>
<dbReference type="RefSeq" id="XP_002045158.1">
    <property type="nucleotide sequence ID" value="XM_002045122.1"/>
</dbReference>
<dbReference type="RefSeq" id="XP_002045248.1">
    <property type="nucleotide sequence ID" value="XM_002045212.1"/>
</dbReference>
<dbReference type="RefSeq" id="XP_002045260.1">
    <property type="nucleotide sequence ID" value="XM_002045224.1"/>
</dbReference>
<dbReference type="RefSeq" id="XP_002045365.1">
    <property type="nucleotide sequence ID" value="XM_002045329.1"/>
</dbReference>
<dbReference type="RefSeq" id="XP_002045371.1">
    <property type="nucleotide sequence ID" value="XM_002045335.1"/>
</dbReference>
<dbReference type="RefSeq" id="XP_002045381.1">
    <property type="nucleotide sequence ID" value="XM_002045345.1"/>
</dbReference>
<dbReference type="RefSeq" id="XP_002045481.1">
    <property type="nucleotide sequence ID" value="XM_002045445.1"/>
</dbReference>
<dbReference type="RefSeq" id="XP_002045551.1">
    <property type="nucleotide sequence ID" value="XM_002045515.1"/>
</dbReference>
<dbReference type="RefSeq" id="XP_002045580.1">
    <property type="nucleotide sequence ID" value="XM_002045544.1"/>
</dbReference>
<dbReference type="RefSeq" id="XP_002045588.1">
    <property type="nucleotide sequence ID" value="XM_002045552.1"/>
</dbReference>
<dbReference type="RefSeq" id="XP_002045618.1">
    <property type="nucleotide sequence ID" value="XM_002045582.1"/>
</dbReference>
<dbReference type="RefSeq" id="XP_002045623.1">
    <property type="nucleotide sequence ID" value="XM_002045587.1"/>
</dbReference>
<dbReference type="RefSeq" id="XP_002045704.1">
    <property type="nucleotide sequence ID" value="XM_002045668.1"/>
</dbReference>
<dbReference type="RefSeq" id="XP_002045708.1">
    <property type="nucleotide sequence ID" value="XM_002045672.1"/>
</dbReference>
<dbReference type="RefSeq" id="XP_002045758.1">
    <property type="nucleotide sequence ID" value="XM_002045722.1"/>
</dbReference>
<dbReference type="RefSeq" id="XP_002045777.1">
    <property type="nucleotide sequence ID" value="XM_002045741.1"/>
</dbReference>
<dbReference type="RefSeq" id="XP_002045784.1">
    <property type="nucleotide sequence ID" value="XM_002045748.1"/>
</dbReference>
<dbReference type="RefSeq" id="XP_002045792.1">
    <property type="nucleotide sequence ID" value="XM_002045756.1"/>
</dbReference>
<dbReference type="RefSeq" id="XP_002045808.1">
    <property type="nucleotide sequence ID" value="XM_002045772.1"/>
</dbReference>
<dbReference type="RefSeq" id="XP_002045814.1">
    <property type="nucleotide sequence ID" value="XM_002045778.1"/>
</dbReference>
<dbReference type="RefSeq" id="XP_002045839.1">
    <property type="nucleotide sequence ID" value="XM_002045803.1"/>
</dbReference>
<dbReference type="RefSeq" id="XP_002045841.1">
    <property type="nucleotide sequence ID" value="XM_002045805.1"/>
</dbReference>
<dbReference type="RefSeq" id="XP_002045872.1">
    <property type="nucleotide sequence ID" value="XM_002045836.1"/>
</dbReference>
<dbReference type="RefSeq" id="XP_002045908.1">
    <property type="nucleotide sequence ID" value="XM_002045872.1"/>
</dbReference>
<dbReference type="SMR" id="Q76FD7"/>
<dbReference type="STRING" id="7238.Q76FD7"/>
<dbReference type="GlyCosmos" id="Q76FD7">
    <property type="glycosylation" value="1 site, No reported glycans"/>
</dbReference>
<dbReference type="EnsemblMetazoa" id="FBtr0193065">
    <property type="protein sequence ID" value="FBpp0191557"/>
    <property type="gene ID" value="FBgn0165031"/>
</dbReference>
<dbReference type="EnsemblMetazoa" id="FBtr0194733">
    <property type="protein sequence ID" value="FBpp0193225"/>
    <property type="gene ID" value="FBgn0166691"/>
</dbReference>
<dbReference type="EnsemblMetazoa" id="FBtr0194922">
    <property type="protein sequence ID" value="FBpp0193414"/>
    <property type="gene ID" value="FBgn0166878"/>
</dbReference>
<dbReference type="EnsemblMetazoa" id="FBtr0196120">
    <property type="protein sequence ID" value="FBpp0194612"/>
    <property type="gene ID" value="FBgn0168066"/>
</dbReference>
<dbReference type="EnsemblMetazoa" id="FBtr0196172">
    <property type="protein sequence ID" value="FBpp0194664"/>
    <property type="gene ID" value="FBgn0168118"/>
</dbReference>
<dbReference type="EnsemblMetazoa" id="FBtr0196176">
    <property type="protein sequence ID" value="FBpp0194668"/>
    <property type="gene ID" value="FBgn0168122"/>
</dbReference>
<dbReference type="EnsemblMetazoa" id="FBtr0196198">
    <property type="protein sequence ID" value="FBpp0194690"/>
    <property type="gene ID" value="FBgn0168144"/>
</dbReference>
<dbReference type="EnsemblMetazoa" id="FBtr0196524">
    <property type="protein sequence ID" value="FBpp0195016"/>
    <property type="gene ID" value="FBgn0168470"/>
</dbReference>
<dbReference type="EnsemblMetazoa" id="FBtr0196526">
    <property type="protein sequence ID" value="FBpp0195018"/>
    <property type="gene ID" value="FBgn0168472"/>
</dbReference>
<dbReference type="EnsemblMetazoa" id="FBtr0196527">
    <property type="protein sequence ID" value="FBpp0195019"/>
    <property type="gene ID" value="FBgn0168473"/>
</dbReference>
<dbReference type="EnsemblMetazoa" id="FBtr0196593">
    <property type="protein sequence ID" value="FBpp0195085"/>
    <property type="gene ID" value="FBgn0168539"/>
</dbReference>
<dbReference type="EnsemblMetazoa" id="FBtr0196599">
    <property type="protein sequence ID" value="FBpp0195091"/>
    <property type="gene ID" value="FBgn0168545"/>
</dbReference>
<dbReference type="EnsemblMetazoa" id="FBtr0196645">
    <property type="protein sequence ID" value="FBpp0195137"/>
    <property type="gene ID" value="FBgn0168591"/>
</dbReference>
<dbReference type="EnsemblMetazoa" id="FBtr0198458">
    <property type="protein sequence ID" value="FBpp0196950"/>
    <property type="gene ID" value="FBgn0170391"/>
</dbReference>
<dbReference type="EnsemblMetazoa" id="FBtr0199153">
    <property type="protein sequence ID" value="FBpp0197645"/>
    <property type="gene ID" value="FBgn0171084"/>
</dbReference>
<dbReference type="EnsemblMetazoa" id="FBtr0199527">
    <property type="protein sequence ID" value="FBpp0198019"/>
    <property type="gene ID" value="FBgn0171457"/>
</dbReference>
<dbReference type="EnsemblMetazoa" id="FBtr0200410">
    <property type="protein sequence ID" value="FBpp0198902"/>
    <property type="gene ID" value="FBgn0172335"/>
</dbReference>
<dbReference type="EnsemblMetazoa" id="FBtr0200696">
    <property type="protein sequence ID" value="FBpp0199188"/>
    <property type="gene ID" value="FBgn0172619"/>
</dbReference>
<dbReference type="EnsemblMetazoa" id="FBtr0201804">
    <property type="protein sequence ID" value="FBpp0200296"/>
    <property type="gene ID" value="FBgn0173724"/>
</dbReference>
<dbReference type="EnsemblMetazoa" id="FBtr0202262">
    <property type="protein sequence ID" value="FBpp0200754"/>
    <property type="gene ID" value="FBgn0174177"/>
</dbReference>
<dbReference type="EnsemblMetazoa" id="FBtr0202313">
    <property type="protein sequence ID" value="FBpp0200805"/>
    <property type="gene ID" value="FBgn0174228"/>
</dbReference>
<dbReference type="EnsemblMetazoa" id="FBtr0202415">
    <property type="protein sequence ID" value="FBpp0200907"/>
    <property type="gene ID" value="FBgn0174330"/>
</dbReference>
<dbReference type="EnsemblMetazoa" id="FBtr0202593">
    <property type="protein sequence ID" value="FBpp0201085"/>
    <property type="gene ID" value="FBgn0174508"/>
</dbReference>
<dbReference type="EnsemblMetazoa" id="FBtr0202657">
    <property type="protein sequence ID" value="FBpp0201149"/>
    <property type="gene ID" value="FBgn0174572"/>
</dbReference>
<dbReference type="EnsemblMetazoa" id="FBtr0202681">
    <property type="protein sequence ID" value="FBpp0201173"/>
    <property type="gene ID" value="FBgn0174596"/>
</dbReference>
<dbReference type="EnsemblMetazoa" id="FBtr0202682">
    <property type="protein sequence ID" value="FBpp0201174"/>
    <property type="gene ID" value="FBgn0174597"/>
</dbReference>
<dbReference type="EnsemblMetazoa" id="FBtr0202686">
    <property type="protein sequence ID" value="FBpp0201178"/>
    <property type="gene ID" value="FBgn0174601"/>
</dbReference>
<dbReference type="EnsemblMetazoa" id="FBtr0202688">
    <property type="protein sequence ID" value="FBpp0201180"/>
    <property type="gene ID" value="FBgn0174603"/>
</dbReference>
<dbReference type="EnsemblMetazoa" id="FBtr0202719">
    <property type="protein sequence ID" value="FBpp0201211"/>
    <property type="gene ID" value="FBgn0174634"/>
</dbReference>
<dbReference type="EnsemblMetazoa" id="FBtr0202721">
    <property type="protein sequence ID" value="FBpp0201213"/>
    <property type="gene ID" value="FBgn0174636"/>
</dbReference>
<dbReference type="EnsemblMetazoa" id="FBtr0202746">
    <property type="protein sequence ID" value="FBpp0201238"/>
    <property type="gene ID" value="FBgn0174660"/>
</dbReference>
<dbReference type="EnsemblMetazoa" id="FBtr0205409">
    <property type="protein sequence ID" value="FBpp0203901"/>
    <property type="gene ID" value="FBgn0177294"/>
</dbReference>
<dbReference type="EnsemblMetazoa" id="FBtr0205569">
    <property type="protein sequence ID" value="FBpp0204061"/>
    <property type="gene ID" value="FBgn0177454"/>
</dbReference>
<dbReference type="EnsemblMetazoa" id="FBtr0206234">
    <property type="protein sequence ID" value="FBpp0204726"/>
    <property type="gene ID" value="FBgn0178116"/>
</dbReference>
<dbReference type="EnsemblMetazoa" id="FBtr0206419">
    <property type="protein sequence ID" value="FBpp0204911"/>
    <property type="gene ID" value="FBgn0178301"/>
</dbReference>
<dbReference type="EnsemblMetazoa" id="FBtr0206790">
    <property type="protein sequence ID" value="FBpp0205282"/>
    <property type="gene ID" value="FBgn0178670"/>
</dbReference>
<dbReference type="EnsemblMetazoa" id="FBtr0207022">
    <property type="protein sequence ID" value="FBpp0205514"/>
    <property type="gene ID" value="FBgn0178902"/>
</dbReference>
<dbReference type="EnsemblMetazoa" id="FBtr0209692">
    <property type="protein sequence ID" value="FBpp0208184"/>
    <property type="gene ID" value="FBgn0181560"/>
</dbReference>
<dbReference type="EnsemblMetazoa" id="FBtr0209709">
    <property type="protein sequence ID" value="FBpp0208201"/>
    <property type="gene ID" value="FBgn0181577"/>
</dbReference>
<dbReference type="HOGENOM" id="CLU_075666_2_0_1"/>
<dbReference type="PhylomeDB" id="Q76FD7"/>
<dbReference type="Proteomes" id="UP000001292">
    <property type="component" value="Unassembled WGS sequence"/>
</dbReference>
<dbReference type="GO" id="GO:0000786">
    <property type="term" value="C:nucleosome"/>
    <property type="evidence" value="ECO:0007669"/>
    <property type="project" value="UniProtKB-KW"/>
</dbReference>
<dbReference type="GO" id="GO:0005634">
    <property type="term" value="C:nucleus"/>
    <property type="evidence" value="ECO:0007669"/>
    <property type="project" value="UniProtKB-SubCell"/>
</dbReference>
<dbReference type="GO" id="GO:0003677">
    <property type="term" value="F:DNA binding"/>
    <property type="evidence" value="ECO:0007669"/>
    <property type="project" value="UniProtKB-KW"/>
</dbReference>
<dbReference type="GO" id="GO:0046982">
    <property type="term" value="F:protein heterodimerization activity"/>
    <property type="evidence" value="ECO:0007669"/>
    <property type="project" value="InterPro"/>
</dbReference>
<dbReference type="GO" id="GO:0044877">
    <property type="term" value="F:protein-containing complex binding"/>
    <property type="evidence" value="ECO:0000250"/>
    <property type="project" value="UniProtKB"/>
</dbReference>
<dbReference type="GO" id="GO:0030527">
    <property type="term" value="F:structural constituent of chromatin"/>
    <property type="evidence" value="ECO:0007669"/>
    <property type="project" value="InterPro"/>
</dbReference>
<dbReference type="CDD" id="cd22910">
    <property type="entry name" value="HFD_H2B"/>
    <property type="match status" value="1"/>
</dbReference>
<dbReference type="FunFam" id="1.10.20.10:FF:000016">
    <property type="entry name" value="Histone H2B"/>
    <property type="match status" value="1"/>
</dbReference>
<dbReference type="Gene3D" id="1.10.20.10">
    <property type="entry name" value="Histone, subunit A"/>
    <property type="match status" value="1"/>
</dbReference>
<dbReference type="InterPro" id="IPR009072">
    <property type="entry name" value="Histone-fold"/>
</dbReference>
<dbReference type="InterPro" id="IPR007125">
    <property type="entry name" value="Histone_H2A/H2B/H3"/>
</dbReference>
<dbReference type="InterPro" id="IPR000558">
    <property type="entry name" value="Histone_H2B"/>
</dbReference>
<dbReference type="InterPro" id="IPR055333">
    <property type="entry name" value="HISTONE_H2B_site"/>
</dbReference>
<dbReference type="PANTHER" id="PTHR23428">
    <property type="entry name" value="HISTONE H2B"/>
    <property type="match status" value="1"/>
</dbReference>
<dbReference type="Pfam" id="PF00125">
    <property type="entry name" value="Histone"/>
    <property type="match status" value="1"/>
</dbReference>
<dbReference type="PRINTS" id="PR00621">
    <property type="entry name" value="HISTONEH2B"/>
</dbReference>
<dbReference type="SMART" id="SM00427">
    <property type="entry name" value="H2B"/>
    <property type="match status" value="1"/>
</dbReference>
<dbReference type="SUPFAM" id="SSF47113">
    <property type="entry name" value="Histone-fold"/>
    <property type="match status" value="1"/>
</dbReference>
<dbReference type="PROSITE" id="PS00357">
    <property type="entry name" value="HISTONE_H2B"/>
    <property type="match status" value="1"/>
</dbReference>
<protein>
    <recommendedName>
        <fullName>Histone H2B</fullName>
    </recommendedName>
</protein>